<feature type="chain" id="PRO_1000215538" description="Proline--tRNA ligase">
    <location>
        <begin position="1"/>
        <end position="574"/>
    </location>
</feature>
<organism>
    <name type="scientific">Teredinibacter turnerae (strain ATCC 39867 / T7901)</name>
    <dbReference type="NCBI Taxonomy" id="377629"/>
    <lineage>
        <taxon>Bacteria</taxon>
        <taxon>Pseudomonadati</taxon>
        <taxon>Pseudomonadota</taxon>
        <taxon>Gammaproteobacteria</taxon>
        <taxon>Cellvibrionales</taxon>
        <taxon>Cellvibrionaceae</taxon>
        <taxon>Teredinibacter</taxon>
    </lineage>
</organism>
<dbReference type="EC" id="6.1.1.15" evidence="1"/>
<dbReference type="EMBL" id="CP001614">
    <property type="protein sequence ID" value="ACR11721.1"/>
    <property type="molecule type" value="Genomic_DNA"/>
</dbReference>
<dbReference type="RefSeq" id="WP_015817832.1">
    <property type="nucleotide sequence ID" value="NC_012997.1"/>
</dbReference>
<dbReference type="SMR" id="C5BPN9"/>
<dbReference type="STRING" id="377629.TERTU_0858"/>
<dbReference type="KEGG" id="ttu:TERTU_0858"/>
<dbReference type="eggNOG" id="COG0442">
    <property type="taxonomic scope" value="Bacteria"/>
</dbReference>
<dbReference type="HOGENOM" id="CLU_016739_0_0_6"/>
<dbReference type="OrthoDB" id="9809052at2"/>
<dbReference type="Proteomes" id="UP000009080">
    <property type="component" value="Chromosome"/>
</dbReference>
<dbReference type="GO" id="GO:0005829">
    <property type="term" value="C:cytosol"/>
    <property type="evidence" value="ECO:0007669"/>
    <property type="project" value="TreeGrafter"/>
</dbReference>
<dbReference type="GO" id="GO:0002161">
    <property type="term" value="F:aminoacyl-tRNA deacylase activity"/>
    <property type="evidence" value="ECO:0007669"/>
    <property type="project" value="InterPro"/>
</dbReference>
<dbReference type="GO" id="GO:0005524">
    <property type="term" value="F:ATP binding"/>
    <property type="evidence" value="ECO:0007669"/>
    <property type="project" value="UniProtKB-UniRule"/>
</dbReference>
<dbReference type="GO" id="GO:0004827">
    <property type="term" value="F:proline-tRNA ligase activity"/>
    <property type="evidence" value="ECO:0007669"/>
    <property type="project" value="UniProtKB-UniRule"/>
</dbReference>
<dbReference type="GO" id="GO:0006433">
    <property type="term" value="P:prolyl-tRNA aminoacylation"/>
    <property type="evidence" value="ECO:0007669"/>
    <property type="project" value="UniProtKB-UniRule"/>
</dbReference>
<dbReference type="CDD" id="cd04334">
    <property type="entry name" value="ProRS-INS"/>
    <property type="match status" value="1"/>
</dbReference>
<dbReference type="CDD" id="cd00861">
    <property type="entry name" value="ProRS_anticodon_short"/>
    <property type="match status" value="1"/>
</dbReference>
<dbReference type="CDD" id="cd00779">
    <property type="entry name" value="ProRS_core_prok"/>
    <property type="match status" value="1"/>
</dbReference>
<dbReference type="FunFam" id="3.30.930.10:FF:000043">
    <property type="entry name" value="Proline--tRNA ligase"/>
    <property type="match status" value="1"/>
</dbReference>
<dbReference type="FunFam" id="3.30.930.10:FF:000097">
    <property type="entry name" value="Proline--tRNA ligase"/>
    <property type="match status" value="1"/>
</dbReference>
<dbReference type="Gene3D" id="3.40.50.800">
    <property type="entry name" value="Anticodon-binding domain"/>
    <property type="match status" value="1"/>
</dbReference>
<dbReference type="Gene3D" id="3.30.930.10">
    <property type="entry name" value="Bira Bifunctional Protein, Domain 2"/>
    <property type="match status" value="2"/>
</dbReference>
<dbReference type="HAMAP" id="MF_01569">
    <property type="entry name" value="Pro_tRNA_synth_type1"/>
    <property type="match status" value="1"/>
</dbReference>
<dbReference type="InterPro" id="IPR002314">
    <property type="entry name" value="aa-tRNA-synt_IIb"/>
</dbReference>
<dbReference type="InterPro" id="IPR006195">
    <property type="entry name" value="aa-tRNA-synth_II"/>
</dbReference>
<dbReference type="InterPro" id="IPR045864">
    <property type="entry name" value="aa-tRNA-synth_II/BPL/LPL"/>
</dbReference>
<dbReference type="InterPro" id="IPR004154">
    <property type="entry name" value="Anticodon-bd"/>
</dbReference>
<dbReference type="InterPro" id="IPR036621">
    <property type="entry name" value="Anticodon-bd_dom_sf"/>
</dbReference>
<dbReference type="InterPro" id="IPR002316">
    <property type="entry name" value="Pro-tRNA-ligase_IIa"/>
</dbReference>
<dbReference type="InterPro" id="IPR004500">
    <property type="entry name" value="Pro-tRNA-synth_IIa_bac-type"/>
</dbReference>
<dbReference type="InterPro" id="IPR023717">
    <property type="entry name" value="Pro-tRNA-Synthase_IIa_type1"/>
</dbReference>
<dbReference type="InterPro" id="IPR050062">
    <property type="entry name" value="Pro-tRNA_synthetase"/>
</dbReference>
<dbReference type="InterPro" id="IPR044140">
    <property type="entry name" value="ProRS_anticodon_short"/>
</dbReference>
<dbReference type="InterPro" id="IPR033730">
    <property type="entry name" value="ProRS_core_prok"/>
</dbReference>
<dbReference type="InterPro" id="IPR036754">
    <property type="entry name" value="YbaK/aa-tRNA-synt-asso_dom_sf"/>
</dbReference>
<dbReference type="InterPro" id="IPR007214">
    <property type="entry name" value="YbaK/aa-tRNA-synth-assoc-dom"/>
</dbReference>
<dbReference type="NCBIfam" id="NF006625">
    <property type="entry name" value="PRK09194.1"/>
    <property type="match status" value="1"/>
</dbReference>
<dbReference type="NCBIfam" id="TIGR00409">
    <property type="entry name" value="proS_fam_II"/>
    <property type="match status" value="1"/>
</dbReference>
<dbReference type="PANTHER" id="PTHR42753">
    <property type="entry name" value="MITOCHONDRIAL RIBOSOME PROTEIN L39/PROLYL-TRNA LIGASE FAMILY MEMBER"/>
    <property type="match status" value="1"/>
</dbReference>
<dbReference type="PANTHER" id="PTHR42753:SF2">
    <property type="entry name" value="PROLINE--TRNA LIGASE"/>
    <property type="match status" value="1"/>
</dbReference>
<dbReference type="Pfam" id="PF03129">
    <property type="entry name" value="HGTP_anticodon"/>
    <property type="match status" value="1"/>
</dbReference>
<dbReference type="Pfam" id="PF00587">
    <property type="entry name" value="tRNA-synt_2b"/>
    <property type="match status" value="1"/>
</dbReference>
<dbReference type="Pfam" id="PF04073">
    <property type="entry name" value="tRNA_edit"/>
    <property type="match status" value="1"/>
</dbReference>
<dbReference type="PIRSF" id="PIRSF001535">
    <property type="entry name" value="ProRS_1"/>
    <property type="match status" value="1"/>
</dbReference>
<dbReference type="PRINTS" id="PR01046">
    <property type="entry name" value="TRNASYNTHPRO"/>
</dbReference>
<dbReference type="SUPFAM" id="SSF52954">
    <property type="entry name" value="Class II aaRS ABD-related"/>
    <property type="match status" value="1"/>
</dbReference>
<dbReference type="SUPFAM" id="SSF55681">
    <property type="entry name" value="Class II aaRS and biotin synthetases"/>
    <property type="match status" value="1"/>
</dbReference>
<dbReference type="SUPFAM" id="SSF55826">
    <property type="entry name" value="YbaK/ProRS associated domain"/>
    <property type="match status" value="1"/>
</dbReference>
<dbReference type="PROSITE" id="PS50862">
    <property type="entry name" value="AA_TRNA_LIGASE_II"/>
    <property type="match status" value="1"/>
</dbReference>
<keyword id="KW-0030">Aminoacyl-tRNA synthetase</keyword>
<keyword id="KW-0067">ATP-binding</keyword>
<keyword id="KW-0963">Cytoplasm</keyword>
<keyword id="KW-0436">Ligase</keyword>
<keyword id="KW-0547">Nucleotide-binding</keyword>
<keyword id="KW-0648">Protein biosynthesis</keyword>
<keyword id="KW-1185">Reference proteome</keyword>
<evidence type="ECO:0000255" key="1">
    <source>
        <dbReference type="HAMAP-Rule" id="MF_01569"/>
    </source>
</evidence>
<name>SYP_TERTT</name>
<comment type="function">
    <text evidence="1">Catalyzes the attachment of proline to tRNA(Pro) in a two-step reaction: proline is first activated by ATP to form Pro-AMP and then transferred to the acceptor end of tRNA(Pro). As ProRS can inadvertently accommodate and process non-cognate amino acids such as alanine and cysteine, to avoid such errors it has two additional distinct editing activities against alanine. One activity is designated as 'pretransfer' editing and involves the tRNA(Pro)-independent hydrolysis of activated Ala-AMP. The other activity is designated 'posttransfer' editing and involves deacylation of mischarged Ala-tRNA(Pro). The misacylated Cys-tRNA(Pro) is not edited by ProRS.</text>
</comment>
<comment type="catalytic activity">
    <reaction evidence="1">
        <text>tRNA(Pro) + L-proline + ATP = L-prolyl-tRNA(Pro) + AMP + diphosphate</text>
        <dbReference type="Rhea" id="RHEA:14305"/>
        <dbReference type="Rhea" id="RHEA-COMP:9700"/>
        <dbReference type="Rhea" id="RHEA-COMP:9702"/>
        <dbReference type="ChEBI" id="CHEBI:30616"/>
        <dbReference type="ChEBI" id="CHEBI:33019"/>
        <dbReference type="ChEBI" id="CHEBI:60039"/>
        <dbReference type="ChEBI" id="CHEBI:78442"/>
        <dbReference type="ChEBI" id="CHEBI:78532"/>
        <dbReference type="ChEBI" id="CHEBI:456215"/>
        <dbReference type="EC" id="6.1.1.15"/>
    </reaction>
</comment>
<comment type="subunit">
    <text evidence="1">Homodimer.</text>
</comment>
<comment type="subcellular location">
    <subcellularLocation>
        <location evidence="1">Cytoplasm</location>
    </subcellularLocation>
</comment>
<comment type="domain">
    <text evidence="1">Consists of three domains: the N-terminal catalytic domain, the editing domain and the C-terminal anticodon-binding domain.</text>
</comment>
<comment type="similarity">
    <text evidence="1">Belongs to the class-II aminoacyl-tRNA synthetase family. ProS type 1 subfamily.</text>
</comment>
<gene>
    <name evidence="1" type="primary">proS</name>
    <name type="ordered locus">TERTU_0858</name>
</gene>
<reference key="1">
    <citation type="journal article" date="2009" name="PLoS ONE">
        <title>The complete genome of Teredinibacter turnerae T7901: an intracellular endosymbiont of marine wood-boring bivalves (shipworms).</title>
        <authorList>
            <person name="Yang J.C."/>
            <person name="Madupu R."/>
            <person name="Durkin A.S."/>
            <person name="Ekborg N.A."/>
            <person name="Pedamallu C.S."/>
            <person name="Hostetler J.B."/>
            <person name="Radune D."/>
            <person name="Toms B.S."/>
            <person name="Henrissat B."/>
            <person name="Coutinho P.M."/>
            <person name="Schwarz S."/>
            <person name="Field L."/>
            <person name="Trindade-Silva A.E."/>
            <person name="Soares C.A.G."/>
            <person name="Elshahawi S."/>
            <person name="Hanora A."/>
            <person name="Schmidt E.W."/>
            <person name="Haygood M.G."/>
            <person name="Posfai J."/>
            <person name="Benner J."/>
            <person name="Madinger C."/>
            <person name="Nove J."/>
            <person name="Anton B."/>
            <person name="Chaudhary K."/>
            <person name="Foster J."/>
            <person name="Holman A."/>
            <person name="Kumar S."/>
            <person name="Lessard P.A."/>
            <person name="Luyten Y.A."/>
            <person name="Slatko B."/>
            <person name="Wood N."/>
            <person name="Wu B."/>
            <person name="Teplitski M."/>
            <person name="Mougous J.D."/>
            <person name="Ward N."/>
            <person name="Eisen J.A."/>
            <person name="Badger J.H."/>
            <person name="Distel D.L."/>
        </authorList>
    </citation>
    <scope>NUCLEOTIDE SEQUENCE [LARGE SCALE GENOMIC DNA]</scope>
    <source>
        <strain>ATCC 39867 / T7901</strain>
    </source>
</reference>
<accession>C5BPN9</accession>
<proteinExistence type="inferred from homology"/>
<sequence length="574" mass="63230">MRASQYLIATQKETPADAEVISHKLMLRAGLIRKMASGLYNWLPLGLRVLRKVENIVRQEMDKSGAQEVLMPVVQPAEIWQESGRWQQYGPELLRINDRHDRAFCLGPTHEEVITDLIRNEVKSYKQLPLNFYQIQTKFRDEVRPRFGVMRAREFLMKDAYSFHISQESLQETYDVMHRTYCNIFDRIGLQYRPVLADTGSIGGSASHEFHVLADSGEDDIAFSSDSDFAANVELAEALAPAKQTPGSSGAEEKHTPSQKSIEEVAAFLSVTPAQTLKTLIVLGETEDEGPAPLVALVLRGDHSLNDIKVSKLEGVADPLTFAPEERIKNELGAEVGSLGPIGLKITVIADRAAAACADFVCGANKTDYHLINANWDKEASYSRVEDLRNVVVGDPSPCGKGTIEIKRGIEVGHIFQLGTKYSAAMKATVLDENGKDVTMTMGCYGIGVSRIVASAIEQNHDDNGIIWPDAIAPFQLAIVPINMHKSDAVKEACETLYDQCQTAGIDVLLMDEPKARLGAMLADVELVGIPHRVVIGDRGLEQGNIEYKGRRDAESQEVAAASLFEFLREKIAP</sequence>
<protein>
    <recommendedName>
        <fullName evidence="1">Proline--tRNA ligase</fullName>
        <ecNumber evidence="1">6.1.1.15</ecNumber>
    </recommendedName>
    <alternativeName>
        <fullName evidence="1">Prolyl-tRNA synthetase</fullName>
        <shortName evidence="1">ProRS</shortName>
    </alternativeName>
</protein>